<keyword id="KW-0143">Chaperone</keyword>
<keyword id="KW-0963">Cytoplasm</keyword>
<keyword id="KW-0235">DNA replication</keyword>
<keyword id="KW-0479">Metal-binding</keyword>
<keyword id="KW-0677">Repeat</keyword>
<keyword id="KW-0346">Stress response</keyword>
<keyword id="KW-0862">Zinc</keyword>
<keyword id="KW-0863">Zinc-finger</keyword>
<gene>
    <name evidence="1" type="primary">dnaJ</name>
    <name type="ordered locus">ABAYE0033</name>
</gene>
<organism>
    <name type="scientific">Acinetobacter baumannii (strain AYE)</name>
    <dbReference type="NCBI Taxonomy" id="509173"/>
    <lineage>
        <taxon>Bacteria</taxon>
        <taxon>Pseudomonadati</taxon>
        <taxon>Pseudomonadota</taxon>
        <taxon>Gammaproteobacteria</taxon>
        <taxon>Moraxellales</taxon>
        <taxon>Moraxellaceae</taxon>
        <taxon>Acinetobacter</taxon>
        <taxon>Acinetobacter calcoaceticus/baumannii complex</taxon>
    </lineage>
</organism>
<comment type="function">
    <text evidence="1">Participates actively in the response to hyperosmotic and heat shock by preventing the aggregation of stress-denatured proteins and by disaggregating proteins, also in an autonomous, DnaK-independent fashion. Unfolded proteins bind initially to DnaJ; upon interaction with the DnaJ-bound protein, DnaK hydrolyzes its bound ATP, resulting in the formation of a stable complex. GrpE releases ADP from DnaK; ATP binding to DnaK triggers the release of the substrate protein, thus completing the reaction cycle. Several rounds of ATP-dependent interactions between DnaJ, DnaK and GrpE are required for fully efficient folding. Also involved, together with DnaK and GrpE, in the DNA replication of plasmids through activation of initiation proteins.</text>
</comment>
<comment type="cofactor">
    <cofactor evidence="1">
        <name>Zn(2+)</name>
        <dbReference type="ChEBI" id="CHEBI:29105"/>
    </cofactor>
    <text evidence="1">Binds 2 Zn(2+) ions per monomer.</text>
</comment>
<comment type="subunit">
    <text evidence="1">Homodimer.</text>
</comment>
<comment type="subcellular location">
    <subcellularLocation>
        <location evidence="1">Cytoplasm</location>
    </subcellularLocation>
</comment>
<comment type="domain">
    <text evidence="1">The J domain is necessary and sufficient to stimulate DnaK ATPase activity. Zinc center 1 plays an important role in the autonomous, DnaK-independent chaperone activity of DnaJ. Zinc center 2 is essential for interaction with DnaK and for DnaJ activity.</text>
</comment>
<comment type="similarity">
    <text evidence="1">Belongs to the DnaJ family.</text>
</comment>
<reference key="1">
    <citation type="journal article" date="2008" name="PLoS ONE">
        <title>Comparative analysis of Acinetobacters: three genomes for three lifestyles.</title>
        <authorList>
            <person name="Vallenet D."/>
            <person name="Nordmann P."/>
            <person name="Barbe V."/>
            <person name="Poirel L."/>
            <person name="Mangenot S."/>
            <person name="Bataille E."/>
            <person name="Dossat C."/>
            <person name="Gas S."/>
            <person name="Kreimeyer A."/>
            <person name="Lenoble P."/>
            <person name="Oztas S."/>
            <person name="Poulain J."/>
            <person name="Segurens B."/>
            <person name="Robert C."/>
            <person name="Abergel C."/>
            <person name="Claverie J.-M."/>
            <person name="Raoult D."/>
            <person name="Medigue C."/>
            <person name="Weissenbach J."/>
            <person name="Cruveiller S."/>
        </authorList>
    </citation>
    <scope>NUCLEOTIDE SEQUENCE [LARGE SCALE GENOMIC DNA]</scope>
    <source>
        <strain>AYE</strain>
    </source>
</reference>
<evidence type="ECO:0000255" key="1">
    <source>
        <dbReference type="HAMAP-Rule" id="MF_01152"/>
    </source>
</evidence>
<evidence type="ECO:0000256" key="2">
    <source>
        <dbReference type="SAM" id="MobiDB-lite"/>
    </source>
</evidence>
<accession>B0VA24</accession>
<protein>
    <recommendedName>
        <fullName evidence="1">Chaperone protein DnaJ</fullName>
    </recommendedName>
</protein>
<proteinExistence type="inferred from homology"/>
<dbReference type="EMBL" id="CU459141">
    <property type="protein sequence ID" value="CAM85023.1"/>
    <property type="molecule type" value="Genomic_DNA"/>
</dbReference>
<dbReference type="RefSeq" id="WP_001119029.1">
    <property type="nucleotide sequence ID" value="NZ_JBDGFB010000004.1"/>
</dbReference>
<dbReference type="SMR" id="B0VA24"/>
<dbReference type="EnsemblBacteria" id="CAM85023">
    <property type="protein sequence ID" value="CAM85023"/>
    <property type="gene ID" value="ABAYE0033"/>
</dbReference>
<dbReference type="GeneID" id="92895684"/>
<dbReference type="KEGG" id="aby:ABAYE0033"/>
<dbReference type="HOGENOM" id="CLU_017633_0_7_6"/>
<dbReference type="GO" id="GO:0005737">
    <property type="term" value="C:cytoplasm"/>
    <property type="evidence" value="ECO:0007669"/>
    <property type="project" value="UniProtKB-SubCell"/>
</dbReference>
<dbReference type="GO" id="GO:0005524">
    <property type="term" value="F:ATP binding"/>
    <property type="evidence" value="ECO:0007669"/>
    <property type="project" value="InterPro"/>
</dbReference>
<dbReference type="GO" id="GO:0031072">
    <property type="term" value="F:heat shock protein binding"/>
    <property type="evidence" value="ECO:0007669"/>
    <property type="project" value="InterPro"/>
</dbReference>
<dbReference type="GO" id="GO:0051082">
    <property type="term" value="F:unfolded protein binding"/>
    <property type="evidence" value="ECO:0007669"/>
    <property type="project" value="UniProtKB-UniRule"/>
</dbReference>
<dbReference type="GO" id="GO:0008270">
    <property type="term" value="F:zinc ion binding"/>
    <property type="evidence" value="ECO:0007669"/>
    <property type="project" value="UniProtKB-UniRule"/>
</dbReference>
<dbReference type="GO" id="GO:0051085">
    <property type="term" value="P:chaperone cofactor-dependent protein refolding"/>
    <property type="evidence" value="ECO:0007669"/>
    <property type="project" value="TreeGrafter"/>
</dbReference>
<dbReference type="GO" id="GO:0006260">
    <property type="term" value="P:DNA replication"/>
    <property type="evidence" value="ECO:0007669"/>
    <property type="project" value="UniProtKB-KW"/>
</dbReference>
<dbReference type="GO" id="GO:0042026">
    <property type="term" value="P:protein refolding"/>
    <property type="evidence" value="ECO:0007669"/>
    <property type="project" value="TreeGrafter"/>
</dbReference>
<dbReference type="GO" id="GO:0009408">
    <property type="term" value="P:response to heat"/>
    <property type="evidence" value="ECO:0007669"/>
    <property type="project" value="InterPro"/>
</dbReference>
<dbReference type="CDD" id="cd06257">
    <property type="entry name" value="DnaJ"/>
    <property type="match status" value="1"/>
</dbReference>
<dbReference type="CDD" id="cd10747">
    <property type="entry name" value="DnaJ_C"/>
    <property type="match status" value="1"/>
</dbReference>
<dbReference type="CDD" id="cd10719">
    <property type="entry name" value="DnaJ_zf"/>
    <property type="match status" value="1"/>
</dbReference>
<dbReference type="FunFam" id="1.10.287.110:FF:000034">
    <property type="entry name" value="Chaperone protein DnaJ"/>
    <property type="match status" value="1"/>
</dbReference>
<dbReference type="FunFam" id="2.10.230.10:FF:000002">
    <property type="entry name" value="Molecular chaperone DnaJ"/>
    <property type="match status" value="1"/>
</dbReference>
<dbReference type="FunFam" id="2.60.260.20:FF:000004">
    <property type="entry name" value="Molecular chaperone DnaJ"/>
    <property type="match status" value="1"/>
</dbReference>
<dbReference type="Gene3D" id="1.10.287.110">
    <property type="entry name" value="DnaJ domain"/>
    <property type="match status" value="1"/>
</dbReference>
<dbReference type="Gene3D" id="2.10.230.10">
    <property type="entry name" value="Heat shock protein DnaJ, cysteine-rich domain"/>
    <property type="match status" value="1"/>
</dbReference>
<dbReference type="Gene3D" id="2.60.260.20">
    <property type="entry name" value="Urease metallochaperone UreE, N-terminal domain"/>
    <property type="match status" value="2"/>
</dbReference>
<dbReference type="HAMAP" id="MF_01152">
    <property type="entry name" value="DnaJ"/>
    <property type="match status" value="1"/>
</dbReference>
<dbReference type="InterPro" id="IPR012724">
    <property type="entry name" value="DnaJ"/>
</dbReference>
<dbReference type="InterPro" id="IPR002939">
    <property type="entry name" value="DnaJ_C"/>
</dbReference>
<dbReference type="InterPro" id="IPR001623">
    <property type="entry name" value="DnaJ_domain"/>
</dbReference>
<dbReference type="InterPro" id="IPR018253">
    <property type="entry name" value="DnaJ_domain_CS"/>
</dbReference>
<dbReference type="InterPro" id="IPR008971">
    <property type="entry name" value="HSP40/DnaJ_pept-bd"/>
</dbReference>
<dbReference type="InterPro" id="IPR001305">
    <property type="entry name" value="HSP_DnaJ_Cys-rich_dom"/>
</dbReference>
<dbReference type="InterPro" id="IPR036410">
    <property type="entry name" value="HSP_DnaJ_Cys-rich_dom_sf"/>
</dbReference>
<dbReference type="InterPro" id="IPR036869">
    <property type="entry name" value="J_dom_sf"/>
</dbReference>
<dbReference type="NCBIfam" id="TIGR02349">
    <property type="entry name" value="DnaJ_bact"/>
    <property type="match status" value="1"/>
</dbReference>
<dbReference type="NCBIfam" id="NF008035">
    <property type="entry name" value="PRK10767.1"/>
    <property type="match status" value="1"/>
</dbReference>
<dbReference type="PANTHER" id="PTHR43096:SF48">
    <property type="entry name" value="CHAPERONE PROTEIN DNAJ"/>
    <property type="match status" value="1"/>
</dbReference>
<dbReference type="PANTHER" id="PTHR43096">
    <property type="entry name" value="DNAJ HOMOLOG 1, MITOCHONDRIAL-RELATED"/>
    <property type="match status" value="1"/>
</dbReference>
<dbReference type="Pfam" id="PF00226">
    <property type="entry name" value="DnaJ"/>
    <property type="match status" value="1"/>
</dbReference>
<dbReference type="Pfam" id="PF01556">
    <property type="entry name" value="DnaJ_C"/>
    <property type="match status" value="1"/>
</dbReference>
<dbReference type="Pfam" id="PF00684">
    <property type="entry name" value="DnaJ_CXXCXGXG"/>
    <property type="match status" value="1"/>
</dbReference>
<dbReference type="PRINTS" id="PR00625">
    <property type="entry name" value="JDOMAIN"/>
</dbReference>
<dbReference type="SMART" id="SM00271">
    <property type="entry name" value="DnaJ"/>
    <property type="match status" value="1"/>
</dbReference>
<dbReference type="SUPFAM" id="SSF46565">
    <property type="entry name" value="Chaperone J-domain"/>
    <property type="match status" value="1"/>
</dbReference>
<dbReference type="SUPFAM" id="SSF57938">
    <property type="entry name" value="DnaJ/Hsp40 cysteine-rich domain"/>
    <property type="match status" value="1"/>
</dbReference>
<dbReference type="SUPFAM" id="SSF49493">
    <property type="entry name" value="HSP40/DnaJ peptide-binding domain"/>
    <property type="match status" value="2"/>
</dbReference>
<dbReference type="PROSITE" id="PS00636">
    <property type="entry name" value="DNAJ_1"/>
    <property type="match status" value="1"/>
</dbReference>
<dbReference type="PROSITE" id="PS50076">
    <property type="entry name" value="DNAJ_2"/>
    <property type="match status" value="1"/>
</dbReference>
<dbReference type="PROSITE" id="PS51188">
    <property type="entry name" value="ZF_CR"/>
    <property type="match status" value="1"/>
</dbReference>
<feature type="chain" id="PRO_1000137652" description="Chaperone protein DnaJ">
    <location>
        <begin position="1"/>
        <end position="370"/>
    </location>
</feature>
<feature type="domain" description="J" evidence="1">
    <location>
        <begin position="5"/>
        <end position="70"/>
    </location>
</feature>
<feature type="repeat" description="CXXCXGXG motif">
    <location>
        <begin position="147"/>
        <end position="154"/>
    </location>
</feature>
<feature type="repeat" description="CXXCXGXG motif">
    <location>
        <begin position="164"/>
        <end position="171"/>
    </location>
</feature>
<feature type="repeat" description="CXXCXGXG motif">
    <location>
        <begin position="186"/>
        <end position="193"/>
    </location>
</feature>
<feature type="repeat" description="CXXCXGXG motif">
    <location>
        <begin position="200"/>
        <end position="207"/>
    </location>
</feature>
<feature type="zinc finger region" description="CR-type" evidence="1">
    <location>
        <begin position="134"/>
        <end position="212"/>
    </location>
</feature>
<feature type="region of interest" description="Disordered" evidence="2">
    <location>
        <begin position="351"/>
        <end position="370"/>
    </location>
</feature>
<feature type="binding site" evidence="1">
    <location>
        <position position="147"/>
    </location>
    <ligand>
        <name>Zn(2+)</name>
        <dbReference type="ChEBI" id="CHEBI:29105"/>
        <label>1</label>
    </ligand>
</feature>
<feature type="binding site" evidence="1">
    <location>
        <position position="150"/>
    </location>
    <ligand>
        <name>Zn(2+)</name>
        <dbReference type="ChEBI" id="CHEBI:29105"/>
        <label>1</label>
    </ligand>
</feature>
<feature type="binding site" evidence="1">
    <location>
        <position position="164"/>
    </location>
    <ligand>
        <name>Zn(2+)</name>
        <dbReference type="ChEBI" id="CHEBI:29105"/>
        <label>2</label>
    </ligand>
</feature>
<feature type="binding site" evidence="1">
    <location>
        <position position="167"/>
    </location>
    <ligand>
        <name>Zn(2+)</name>
        <dbReference type="ChEBI" id="CHEBI:29105"/>
        <label>2</label>
    </ligand>
</feature>
<feature type="binding site" evidence="1">
    <location>
        <position position="186"/>
    </location>
    <ligand>
        <name>Zn(2+)</name>
        <dbReference type="ChEBI" id="CHEBI:29105"/>
        <label>2</label>
    </ligand>
</feature>
<feature type="binding site" evidence="1">
    <location>
        <position position="189"/>
    </location>
    <ligand>
        <name>Zn(2+)</name>
        <dbReference type="ChEBI" id="CHEBI:29105"/>
        <label>2</label>
    </ligand>
</feature>
<feature type="binding site" evidence="1">
    <location>
        <position position="200"/>
    </location>
    <ligand>
        <name>Zn(2+)</name>
        <dbReference type="ChEBI" id="CHEBI:29105"/>
        <label>1</label>
    </ligand>
</feature>
<feature type="binding site" evidence="1">
    <location>
        <position position="203"/>
    </location>
    <ligand>
        <name>Zn(2+)</name>
        <dbReference type="ChEBI" id="CHEBI:29105"/>
        <label>1</label>
    </ligand>
</feature>
<sequence>MAKRDYYEVLGVSKTASDDEIKKAYRKLAMKYHPDRNPDNAEAEEKFKEASEAYEILSDSEKRSMYDRMGHNAFEGGFGGAGGGFGGFSAEDIFSQFGDIFGGAFGGGGRQQRQRRGSDLRYVMELTLEEAVKGVKKTITFTAPAPCDVCDGKGSKNPKDVETCKTCHGSGQVRMQQGFFSVQQTCGTCRGQGKIIKNPCHACHGSGVADRQQTLEVTIPAGVDNGDRVRLSGKGEAIRDGQAGDLYVEVVVREHEIFQRDGADLYMDVPVSIADAALGKEIEIPTLEGRVSLKIPEGTQTGKLFRLRGKGVRPVRSSMVGDLLCRIVVETPVNLTSRQRELLKELQASFDGEDSASSPKKKSFFDRLFD</sequence>
<name>DNAJ_ACIBY</name>